<reference key="1">
    <citation type="journal article" date="2009" name="PLoS Biol.">
        <title>Lineage-specific biology revealed by a finished genome assembly of the mouse.</title>
        <authorList>
            <person name="Church D.M."/>
            <person name="Goodstadt L."/>
            <person name="Hillier L.W."/>
            <person name="Zody M.C."/>
            <person name="Goldstein S."/>
            <person name="She X."/>
            <person name="Bult C.J."/>
            <person name="Agarwala R."/>
            <person name="Cherry J.L."/>
            <person name="DiCuccio M."/>
            <person name="Hlavina W."/>
            <person name="Kapustin Y."/>
            <person name="Meric P."/>
            <person name="Maglott D."/>
            <person name="Birtle Z."/>
            <person name="Marques A.C."/>
            <person name="Graves T."/>
            <person name="Zhou S."/>
            <person name="Teague B."/>
            <person name="Potamousis K."/>
            <person name="Churas C."/>
            <person name="Place M."/>
            <person name="Herschleb J."/>
            <person name="Runnheim R."/>
            <person name="Forrest D."/>
            <person name="Amos-Landgraf J."/>
            <person name="Schwartz D.C."/>
            <person name="Cheng Z."/>
            <person name="Lindblad-Toh K."/>
            <person name="Eichler E.E."/>
            <person name="Ponting C.P."/>
        </authorList>
    </citation>
    <scope>NUCLEOTIDE SEQUENCE [LARGE SCALE GENOMIC DNA]</scope>
    <source>
        <strain>C57BL/6J</strain>
    </source>
</reference>
<reference key="2">
    <citation type="journal article" date="2004" name="Genome Res.">
        <title>The status, quality, and expansion of the NIH full-length cDNA project: the Mammalian Gene Collection (MGC).</title>
        <authorList>
            <consortium name="The MGC Project Team"/>
        </authorList>
    </citation>
    <scope>NUCLEOTIDE SEQUENCE [LARGE SCALE MRNA]</scope>
    <source>
        <tissue>Testis</tissue>
    </source>
</reference>
<reference key="3">
    <citation type="journal article" date="2007" name="Proc. Natl. Acad. Sci. U.S.A.">
        <title>Large-scale phosphorylation analysis of mouse liver.</title>
        <authorList>
            <person name="Villen J."/>
            <person name="Beausoleil S.A."/>
            <person name="Gerber S.A."/>
            <person name="Gygi S.P."/>
        </authorList>
    </citation>
    <scope>IDENTIFICATION BY MASS SPECTROMETRY [LARGE SCALE ANALYSIS]</scope>
    <source>
        <tissue>Liver</tissue>
    </source>
</reference>
<reference key="4">
    <citation type="journal article" date="2010" name="Cell">
        <title>A tissue-specific atlas of mouse protein phosphorylation and expression.</title>
        <authorList>
            <person name="Huttlin E.L."/>
            <person name="Jedrychowski M.P."/>
            <person name="Elias J.E."/>
            <person name="Goswami T."/>
            <person name="Rad R."/>
            <person name="Beausoleil S.A."/>
            <person name="Villen J."/>
            <person name="Haas W."/>
            <person name="Sowa M.E."/>
            <person name="Gygi S.P."/>
        </authorList>
    </citation>
    <scope>PHOSPHORYLATION [LARGE SCALE ANALYSIS] AT SER-357</scope>
    <scope>IDENTIFICATION BY MASS SPECTROMETRY [LARGE SCALE ANALYSIS]</scope>
    <source>
        <tissue>Brain</tissue>
    </source>
</reference>
<reference key="5">
    <citation type="journal article" date="2014" name="Mol. Cell. Proteomics">
        <title>Immunoaffinity enrichment and mass spectrometry analysis of protein methylation.</title>
        <authorList>
            <person name="Guo A."/>
            <person name="Gu H."/>
            <person name="Zhou J."/>
            <person name="Mulhern D."/>
            <person name="Wang Y."/>
            <person name="Lee K.A."/>
            <person name="Yang V."/>
            <person name="Aguiar M."/>
            <person name="Kornhauser J."/>
            <person name="Jia X."/>
            <person name="Ren J."/>
            <person name="Beausoleil S.A."/>
            <person name="Silva J.C."/>
            <person name="Vemulapalli V."/>
            <person name="Bedford M.T."/>
            <person name="Comb M.J."/>
        </authorList>
    </citation>
    <scope>METHYLATION [LARGE SCALE ANALYSIS] AT ARG-432</scope>
    <scope>IDENTIFICATION BY MASS SPECTROMETRY [LARGE SCALE ANALYSIS]</scope>
    <source>
        <tissue>Brain</tissue>
        <tissue>Embryo</tissue>
    </source>
</reference>
<reference key="6">
    <citation type="journal article" date="2017" name="Nat. Commun.">
        <title>Hierarchical assembly of centriole subdistal appendages via centrosome binding proteins CCDC120 and CCDC68.</title>
        <authorList>
            <person name="Huang N."/>
            <person name="Xia Y."/>
            <person name="Zhang D."/>
            <person name="Wang S."/>
            <person name="Bao Y."/>
            <person name="He R."/>
            <person name="Teng J."/>
            <person name="Chen J."/>
        </authorList>
    </citation>
    <scope>FUNCTION</scope>
</reference>
<feature type="chain" id="PRO_0000442769" description="Coiled-coil domain-containing protein 120">
    <location>
        <begin position="1"/>
        <end position="629"/>
    </location>
</feature>
<feature type="region of interest" description="Involved in CYTH2-binding" evidence="1">
    <location>
        <begin position="31"/>
        <end position="70"/>
    </location>
</feature>
<feature type="region of interest" description="Disordered" evidence="3">
    <location>
        <begin position="209"/>
        <end position="356"/>
    </location>
</feature>
<feature type="region of interest" description="Disordered" evidence="3">
    <location>
        <begin position="399"/>
        <end position="432"/>
    </location>
</feature>
<feature type="region of interest" description="Disordered" evidence="3">
    <location>
        <begin position="602"/>
        <end position="629"/>
    </location>
</feature>
<feature type="coiled-coil region" evidence="2">
    <location>
        <begin position="109"/>
        <end position="173"/>
    </location>
</feature>
<feature type="compositionally biased region" description="Low complexity" evidence="3">
    <location>
        <begin position="209"/>
        <end position="219"/>
    </location>
</feature>
<feature type="compositionally biased region" description="Low complexity" evidence="3">
    <location>
        <begin position="279"/>
        <end position="294"/>
    </location>
</feature>
<feature type="compositionally biased region" description="Polar residues" evidence="3">
    <location>
        <begin position="323"/>
        <end position="332"/>
    </location>
</feature>
<feature type="compositionally biased region" description="Low complexity" evidence="3">
    <location>
        <begin position="418"/>
        <end position="432"/>
    </location>
</feature>
<feature type="modified residue" description="Phosphoserine" evidence="1">
    <location>
        <position position="355"/>
    </location>
</feature>
<feature type="modified residue" description="Phosphoserine" evidence="7">
    <location>
        <position position="357"/>
    </location>
</feature>
<feature type="modified residue" description="Omega-N-methylarginine" evidence="8">
    <location>
        <position position="432"/>
    </location>
</feature>
<gene>
    <name evidence="6" type="primary">Ccdc120</name>
</gene>
<comment type="function">
    <text evidence="1 4">Centriolar protein required for centriole subdistal appendage assembly and microtubule anchoring in interphase cells (PubMed:28422092). Together with CCDC68, cooperate with subdistal appendage components ODF2, NIN and CEP170 for hierarchical subdistal appendage assembly (PubMed:28422092). Recruits NIN and CEP170 to centrosomes (PubMed:28422092). Also required for neurite growth (By similarity). Localizes CYTH2 to vesicles to allow its transport along neurites, and subsequent ARF6 activation and neurite growth (By similarity).</text>
</comment>
<comment type="subunit">
    <text evidence="1">Interacts with NIN and CEP170; leading to recruit them to centrosomes (By similarity). Interacts with CYTH2; this interaction is direct and stabilizes CCDC120, possibly by preventing ubiquitination (By similarity).</text>
</comment>
<comment type="subcellular location">
    <subcellularLocation>
        <location evidence="1">Cytoplasm</location>
        <location evidence="1">Cytoskeleton</location>
        <location evidence="1">Microtubule organizing center</location>
        <location evidence="1">Centrosome</location>
        <location evidence="1">Centriole</location>
    </subcellularLocation>
    <subcellularLocation>
        <location evidence="1">Cytoplasm</location>
    </subcellularLocation>
    <subcellularLocation>
        <location evidence="1">Cell projection</location>
        <location evidence="1">Neuron projection</location>
    </subcellularLocation>
    <subcellularLocation>
        <location evidence="1">Cell projection</location>
        <location evidence="1">Growth cone</location>
    </subcellularLocation>
    <subcellularLocation>
        <location evidence="1">Endosome</location>
    </subcellularLocation>
    <text evidence="1">Localizes to the subdistal appendages of mother centrioles and proximal ends of both centrioles in interphase cells (By similarity). Recruited to subdistal appendages by ODF2 (By similarity). In differentiating neuroblastoma cells, colocalizes with CYTH2 in both neurite shaft and growth cone areas (By similarity). Partially colocalizes with endosomes along neurites in differentiating neuroblastoma cells (By similarity).</text>
</comment>
<comment type="PTM">
    <text evidence="1">Ubiquitinated; interaction with CYTH2 may prevent ubiquitination.</text>
</comment>
<sequence>MEVKGQLISSPTFTAPAALFGEAAPLVKSDRLRGLLDRQRALQEALSVKLQELRKVCLQEAELTGQLPPECPLEPGERPQLVRRRPPAARAYPPPHPNPAHHSLCPAEELALEALEREVSVQQQIAAAARRLALAPDLNGEQRRRRRQVQVDALRRLHELEEQLRDFRARLGLPVLQPLPLSAGALVNAQGVCLGTRLAQLSQEDVVLHSESSSLSESGASHDNEEPHSCFPLTERPSPPKAWDQFRAVSGGSPERRAPWKPPPSDIYGDLKSRRNSVASPTSPTRSLPRSASSFEGRSVPATPVLTRGSGPRLCKPEGLHSRQWSGSQDSQMGFPRPDPASDRASLFAARTRRSNSSEALLVDRAAAGGAGSPPAPLAPPAAGPPVCKSSEVLYERPQPVPSFSSRTTGPPDPPRAARPSSAAPASRGAPRLPTVCGDFLLDYPLDRGLPRGSGGAGWGELLPAPEVPGPLSRRDGLLAMLPGPPPIYAADGSSPLLRSKDPNTRAIRSKPSGLPPEAVEGLEVHPNPLLWMPPPTRIPPAGERGGHKNLALEGLRDWYIRNSGLAVGPQRRPMLPHVGPTHTPFLHARCYEVGQSLYGPPSQAPLPHSRSFTAPPVSGRYGGAFTDG</sequence>
<organism>
    <name type="scientific">Mus musculus</name>
    <name type="common">Mouse</name>
    <dbReference type="NCBI Taxonomy" id="10090"/>
    <lineage>
        <taxon>Eukaryota</taxon>
        <taxon>Metazoa</taxon>
        <taxon>Chordata</taxon>
        <taxon>Craniata</taxon>
        <taxon>Vertebrata</taxon>
        <taxon>Euteleostomi</taxon>
        <taxon>Mammalia</taxon>
        <taxon>Eutheria</taxon>
        <taxon>Euarchontoglires</taxon>
        <taxon>Glires</taxon>
        <taxon>Rodentia</taxon>
        <taxon>Myomorpha</taxon>
        <taxon>Muroidea</taxon>
        <taxon>Muridae</taxon>
        <taxon>Murinae</taxon>
        <taxon>Mus</taxon>
        <taxon>Mus</taxon>
    </lineage>
</organism>
<name>CC120_MOUSE</name>
<evidence type="ECO:0000250" key="1">
    <source>
        <dbReference type="UniProtKB" id="Q96HB5"/>
    </source>
</evidence>
<evidence type="ECO:0000255" key="2"/>
<evidence type="ECO:0000256" key="3">
    <source>
        <dbReference type="SAM" id="MobiDB-lite"/>
    </source>
</evidence>
<evidence type="ECO:0000269" key="4">
    <source>
    </source>
</evidence>
<evidence type="ECO:0000305" key="5"/>
<evidence type="ECO:0000312" key="6">
    <source>
        <dbReference type="MGI" id="MGI:1859619"/>
    </source>
</evidence>
<evidence type="ECO:0007744" key="7">
    <source>
    </source>
</evidence>
<evidence type="ECO:0007744" key="8">
    <source>
    </source>
</evidence>
<dbReference type="EMBL" id="AL671995">
    <property type="status" value="NOT_ANNOTATED_CDS"/>
    <property type="molecule type" value="Genomic_DNA"/>
</dbReference>
<dbReference type="EMBL" id="BC139064">
    <property type="protein sequence ID" value="AAI39065.1"/>
    <property type="molecule type" value="mRNA"/>
</dbReference>
<dbReference type="CCDS" id="CCDS29972.1"/>
<dbReference type="RefSeq" id="NP_997085.2">
    <property type="nucleotide sequence ID" value="NM_207202.2"/>
</dbReference>
<dbReference type="SMR" id="A2AEV7"/>
<dbReference type="FunCoup" id="A2AEV7">
    <property type="interactions" value="158"/>
</dbReference>
<dbReference type="STRING" id="10090.ENSMUSP00000033490"/>
<dbReference type="iPTMnet" id="A2AEV7"/>
<dbReference type="PhosphoSitePlus" id="A2AEV7"/>
<dbReference type="jPOST" id="A2AEV7"/>
<dbReference type="PaxDb" id="10090-ENSMUSP00000033490"/>
<dbReference type="PeptideAtlas" id="A2AEV7"/>
<dbReference type="ProteomicsDB" id="279939"/>
<dbReference type="Antibodypedia" id="347">
    <property type="antibodies" value="112 antibodies from 20 providers"/>
</dbReference>
<dbReference type="Ensembl" id="ENSMUST00000033490.13">
    <property type="protein sequence ID" value="ENSMUSP00000033490.7"/>
    <property type="gene ID" value="ENSMUSG00000031150.14"/>
</dbReference>
<dbReference type="GeneID" id="54648"/>
<dbReference type="KEGG" id="mmu:54648"/>
<dbReference type="UCSC" id="uc009smf.1">
    <property type="organism name" value="mouse"/>
</dbReference>
<dbReference type="AGR" id="MGI:1859619"/>
<dbReference type="CTD" id="90060"/>
<dbReference type="MGI" id="MGI:1859619">
    <property type="gene designation" value="Ccdc120"/>
</dbReference>
<dbReference type="VEuPathDB" id="HostDB:ENSMUSG00000031150"/>
<dbReference type="eggNOG" id="KOG3529">
    <property type="taxonomic scope" value="Eukaryota"/>
</dbReference>
<dbReference type="GeneTree" id="ENSGT00940000154102"/>
<dbReference type="HOGENOM" id="CLU_029533_0_0_1"/>
<dbReference type="InParanoid" id="A2AEV7"/>
<dbReference type="OMA" id="CWVINEA"/>
<dbReference type="OrthoDB" id="10063592at2759"/>
<dbReference type="PhylomeDB" id="A2AEV7"/>
<dbReference type="TreeFam" id="TF328984"/>
<dbReference type="BioGRID-ORCS" id="54648">
    <property type="hits" value="3 hits in 81 CRISPR screens"/>
</dbReference>
<dbReference type="PRO" id="PR:A2AEV7"/>
<dbReference type="Proteomes" id="UP000000589">
    <property type="component" value="Chromosome X"/>
</dbReference>
<dbReference type="RNAct" id="A2AEV7">
    <property type="molecule type" value="protein"/>
</dbReference>
<dbReference type="Bgee" id="ENSMUSG00000031150">
    <property type="expression patterns" value="Expressed in lip and 155 other cell types or tissues"/>
</dbReference>
<dbReference type="ExpressionAtlas" id="A2AEV7">
    <property type="expression patterns" value="baseline and differential"/>
</dbReference>
<dbReference type="GO" id="GO:0120103">
    <property type="term" value="C:centriolar subdistal appendage"/>
    <property type="evidence" value="ECO:0007669"/>
    <property type="project" value="Ensembl"/>
</dbReference>
<dbReference type="GO" id="GO:0005814">
    <property type="term" value="C:centriole"/>
    <property type="evidence" value="ECO:0007669"/>
    <property type="project" value="UniProtKB-SubCell"/>
</dbReference>
<dbReference type="GO" id="GO:0005768">
    <property type="term" value="C:endosome"/>
    <property type="evidence" value="ECO:0007669"/>
    <property type="project" value="UniProtKB-SubCell"/>
</dbReference>
<dbReference type="GO" id="GO:0030426">
    <property type="term" value="C:growth cone"/>
    <property type="evidence" value="ECO:0007669"/>
    <property type="project" value="UniProtKB-SubCell"/>
</dbReference>
<dbReference type="GO" id="GO:0034454">
    <property type="term" value="P:microtubule anchoring at centrosome"/>
    <property type="evidence" value="ECO:0007669"/>
    <property type="project" value="Ensembl"/>
</dbReference>
<dbReference type="GO" id="GO:0008104">
    <property type="term" value="P:protein localization"/>
    <property type="evidence" value="ECO:0007669"/>
    <property type="project" value="Ensembl"/>
</dbReference>
<dbReference type="InterPro" id="IPR043447">
    <property type="entry name" value="CCDC120/INAVA"/>
</dbReference>
<dbReference type="InterPro" id="IPR021774">
    <property type="entry name" value="CUPID"/>
</dbReference>
<dbReference type="PANTHER" id="PTHR16093:SF5">
    <property type="entry name" value="COILED-COIL DOMAIN-CONTAINING PROTEIN 120"/>
    <property type="match status" value="1"/>
</dbReference>
<dbReference type="PANTHER" id="PTHR16093">
    <property type="entry name" value="COILED-COIL DOMAIN-CONTAINING PROTEIN 120 FAMILY MEMBER"/>
    <property type="match status" value="1"/>
</dbReference>
<dbReference type="Pfam" id="PF11819">
    <property type="entry name" value="CUPID"/>
    <property type="match status" value="1"/>
</dbReference>
<proteinExistence type="evidence at protein level"/>
<protein>
    <recommendedName>
        <fullName evidence="5">Coiled-coil domain-containing protein 120</fullName>
    </recommendedName>
</protein>
<keyword id="KW-0966">Cell projection</keyword>
<keyword id="KW-0175">Coiled coil</keyword>
<keyword id="KW-0963">Cytoplasm</keyword>
<keyword id="KW-0206">Cytoskeleton</keyword>
<keyword id="KW-0217">Developmental protein</keyword>
<keyword id="KW-0967">Endosome</keyword>
<keyword id="KW-0488">Methylation</keyword>
<keyword id="KW-0597">Phosphoprotein</keyword>
<keyword id="KW-1185">Reference proteome</keyword>
<keyword id="KW-0832">Ubl conjugation</keyword>
<accession>A2AEV7</accession>
<accession>A2AEV8</accession>